<proteinExistence type="inferred from homology"/>
<organism>
    <name type="scientific">Burkholderia ambifaria (strain ATCC BAA-244 / DSM 16087 / CCUG 44356 / LMG 19182 / AMMD)</name>
    <name type="common">Burkholderia cepacia (strain AMMD)</name>
    <dbReference type="NCBI Taxonomy" id="339670"/>
    <lineage>
        <taxon>Bacteria</taxon>
        <taxon>Pseudomonadati</taxon>
        <taxon>Pseudomonadota</taxon>
        <taxon>Betaproteobacteria</taxon>
        <taxon>Burkholderiales</taxon>
        <taxon>Burkholderiaceae</taxon>
        <taxon>Burkholderia</taxon>
        <taxon>Burkholderia cepacia complex</taxon>
    </lineage>
</organism>
<name>Y2548_BURCM</name>
<protein>
    <recommendedName>
        <fullName>UPF0758 protein Bamb_2548</fullName>
    </recommendedName>
</protein>
<evidence type="ECO:0000255" key="1">
    <source>
        <dbReference type="PROSITE-ProRule" id="PRU01182"/>
    </source>
</evidence>
<evidence type="ECO:0000256" key="2">
    <source>
        <dbReference type="SAM" id="MobiDB-lite"/>
    </source>
</evidence>
<evidence type="ECO:0000305" key="3"/>
<gene>
    <name type="ordered locus">Bamb_2548</name>
</gene>
<reference key="1">
    <citation type="submission" date="2006-08" db="EMBL/GenBank/DDBJ databases">
        <title>Complete sequence of chromosome 1 of Burkholderia cepacia AMMD.</title>
        <authorList>
            <person name="Copeland A."/>
            <person name="Lucas S."/>
            <person name="Lapidus A."/>
            <person name="Barry K."/>
            <person name="Detter J.C."/>
            <person name="Glavina del Rio T."/>
            <person name="Hammon N."/>
            <person name="Israni S."/>
            <person name="Pitluck S."/>
            <person name="Bruce D."/>
            <person name="Chain P."/>
            <person name="Malfatti S."/>
            <person name="Shin M."/>
            <person name="Vergez L."/>
            <person name="Schmutz J."/>
            <person name="Larimer F."/>
            <person name="Land M."/>
            <person name="Hauser L."/>
            <person name="Kyrpides N."/>
            <person name="Kim E."/>
            <person name="Parke J."/>
            <person name="Coenye T."/>
            <person name="Konstantinidis K."/>
            <person name="Ramette A."/>
            <person name="Tiedje J."/>
            <person name="Richardson P."/>
        </authorList>
    </citation>
    <scope>NUCLEOTIDE SEQUENCE [LARGE SCALE GENOMIC DNA]</scope>
    <source>
        <strain>ATCC BAA-244 / DSM 16087 / CCUG 44356 / LMG 19182 / AMMD</strain>
    </source>
</reference>
<feature type="chain" id="PRO_0000322670" description="UPF0758 protein Bamb_2548">
    <location>
        <begin position="1"/>
        <end position="258"/>
    </location>
</feature>
<feature type="domain" description="MPN" evidence="1">
    <location>
        <begin position="136"/>
        <end position="258"/>
    </location>
</feature>
<feature type="region of interest" description="Disordered" evidence="2">
    <location>
        <begin position="1"/>
        <end position="43"/>
    </location>
</feature>
<feature type="short sequence motif" description="JAMM motif" evidence="1">
    <location>
        <begin position="207"/>
        <end position="220"/>
    </location>
</feature>
<feature type="compositionally biased region" description="Basic residues" evidence="2">
    <location>
        <begin position="31"/>
        <end position="43"/>
    </location>
</feature>
<feature type="binding site" evidence="1">
    <location>
        <position position="207"/>
    </location>
    <ligand>
        <name>Zn(2+)</name>
        <dbReference type="ChEBI" id="CHEBI:29105"/>
        <note>catalytic</note>
    </ligand>
</feature>
<feature type="binding site" evidence="1">
    <location>
        <position position="209"/>
    </location>
    <ligand>
        <name>Zn(2+)</name>
        <dbReference type="ChEBI" id="CHEBI:29105"/>
        <note>catalytic</note>
    </ligand>
</feature>
<feature type="binding site" evidence="1">
    <location>
        <position position="220"/>
    </location>
    <ligand>
        <name>Zn(2+)</name>
        <dbReference type="ChEBI" id="CHEBI:29105"/>
        <note>catalytic</note>
    </ligand>
</feature>
<dbReference type="EMBL" id="CP000440">
    <property type="protein sequence ID" value="ABI88104.1"/>
    <property type="molecule type" value="Genomic_DNA"/>
</dbReference>
<dbReference type="SMR" id="Q0BCL9"/>
<dbReference type="KEGG" id="bam:Bamb_2548"/>
<dbReference type="PATRIC" id="fig|339670.21.peg.2359"/>
<dbReference type="eggNOG" id="COG2003">
    <property type="taxonomic scope" value="Bacteria"/>
</dbReference>
<dbReference type="Proteomes" id="UP000000662">
    <property type="component" value="Chromosome 1"/>
</dbReference>
<dbReference type="GO" id="GO:0046872">
    <property type="term" value="F:metal ion binding"/>
    <property type="evidence" value="ECO:0007669"/>
    <property type="project" value="UniProtKB-KW"/>
</dbReference>
<dbReference type="GO" id="GO:0008237">
    <property type="term" value="F:metallopeptidase activity"/>
    <property type="evidence" value="ECO:0007669"/>
    <property type="project" value="UniProtKB-KW"/>
</dbReference>
<dbReference type="GO" id="GO:0006508">
    <property type="term" value="P:proteolysis"/>
    <property type="evidence" value="ECO:0007669"/>
    <property type="project" value="UniProtKB-KW"/>
</dbReference>
<dbReference type="CDD" id="cd08071">
    <property type="entry name" value="MPN_DUF2466"/>
    <property type="match status" value="1"/>
</dbReference>
<dbReference type="Gene3D" id="3.40.140.10">
    <property type="entry name" value="Cytidine Deaminase, domain 2"/>
    <property type="match status" value="1"/>
</dbReference>
<dbReference type="InterPro" id="IPR037518">
    <property type="entry name" value="MPN"/>
</dbReference>
<dbReference type="InterPro" id="IPR025657">
    <property type="entry name" value="RadC_JAB"/>
</dbReference>
<dbReference type="InterPro" id="IPR001405">
    <property type="entry name" value="UPF0758"/>
</dbReference>
<dbReference type="InterPro" id="IPR020891">
    <property type="entry name" value="UPF0758_CS"/>
</dbReference>
<dbReference type="InterPro" id="IPR046778">
    <property type="entry name" value="UPF0758_N"/>
</dbReference>
<dbReference type="NCBIfam" id="NF000642">
    <property type="entry name" value="PRK00024.1"/>
    <property type="match status" value="1"/>
</dbReference>
<dbReference type="NCBIfam" id="TIGR00608">
    <property type="entry name" value="radc"/>
    <property type="match status" value="1"/>
</dbReference>
<dbReference type="PANTHER" id="PTHR30471">
    <property type="entry name" value="DNA REPAIR PROTEIN RADC"/>
    <property type="match status" value="1"/>
</dbReference>
<dbReference type="PANTHER" id="PTHR30471:SF3">
    <property type="entry name" value="UPF0758 PROTEIN YEES-RELATED"/>
    <property type="match status" value="1"/>
</dbReference>
<dbReference type="Pfam" id="PF04002">
    <property type="entry name" value="RadC"/>
    <property type="match status" value="1"/>
</dbReference>
<dbReference type="Pfam" id="PF20582">
    <property type="entry name" value="UPF0758_N"/>
    <property type="match status" value="1"/>
</dbReference>
<dbReference type="PROSITE" id="PS50249">
    <property type="entry name" value="MPN"/>
    <property type="match status" value="1"/>
</dbReference>
<dbReference type="PROSITE" id="PS01302">
    <property type="entry name" value="UPF0758"/>
    <property type="match status" value="1"/>
</dbReference>
<sequence length="258" mass="28065">MLSPCLAAPATECRDPADAPAAPARHTGPARPRKRRPRNWKPHLPRERLLERGPAALTDAELIALLLGTGGGGRDVFASARALLARFGDSLRDMLDAEPDVFATHPGIGTARSAVLIAVTEIVRRALVEKARERLQIDSPGAVEDYLRLRIGTRPHEVFVTLYLDARHGLIDVEESARGSLTRMAVYPREIVRRALVLNAAALIIAHNHPSGAVQPSAEDRRLTRVLHEALALIDAKLLDHVVVGTADTFSFARAGWL</sequence>
<accession>Q0BCL9</accession>
<keyword id="KW-0378">Hydrolase</keyword>
<keyword id="KW-0479">Metal-binding</keyword>
<keyword id="KW-0482">Metalloprotease</keyword>
<keyword id="KW-0645">Protease</keyword>
<keyword id="KW-0862">Zinc</keyword>
<comment type="similarity">
    <text evidence="3">Belongs to the UPF0758 family.</text>
</comment>